<proteinExistence type="inferred from homology"/>
<dbReference type="EMBL" id="AY464052">
    <property type="protein sequence ID" value="AAS45906.1"/>
    <property type="molecule type" value="Genomic_DNA"/>
</dbReference>
<dbReference type="SMR" id="Q6S6P9"/>
<dbReference type="Proteomes" id="UP000008296">
    <property type="component" value="Segment"/>
</dbReference>
<dbReference type="GO" id="GO:0042025">
    <property type="term" value="C:host cell nucleus"/>
    <property type="evidence" value="ECO:0007669"/>
    <property type="project" value="UniProtKB-SubCell"/>
</dbReference>
<dbReference type="GO" id="GO:0019028">
    <property type="term" value="C:viral capsid"/>
    <property type="evidence" value="ECO:0007669"/>
    <property type="project" value="UniProtKB-KW"/>
</dbReference>
<dbReference type="GO" id="GO:0003677">
    <property type="term" value="F:DNA binding"/>
    <property type="evidence" value="ECO:0007669"/>
    <property type="project" value="InterPro"/>
</dbReference>
<dbReference type="GO" id="GO:0019069">
    <property type="term" value="P:viral capsid assembly"/>
    <property type="evidence" value="ECO:0007669"/>
    <property type="project" value="InterPro"/>
</dbReference>
<dbReference type="HAMAP" id="MF_04018">
    <property type="entry name" value="HSV_TRX1"/>
    <property type="match status" value="1"/>
</dbReference>
<dbReference type="InterPro" id="IPR004999">
    <property type="entry name" value="Herpes_1"/>
</dbReference>
<dbReference type="Pfam" id="PF03327">
    <property type="entry name" value="Herpes_VP19C"/>
    <property type="match status" value="1"/>
</dbReference>
<organismHost>
    <name type="scientific">Equus caballus</name>
    <name type="common">Horse</name>
    <dbReference type="NCBI Taxonomy" id="9796"/>
</organismHost>
<keyword id="KW-0167">Capsid protein</keyword>
<keyword id="KW-1048">Host nucleus</keyword>
<keyword id="KW-0946">Virion</keyword>
<reference evidence="2 3" key="1">
    <citation type="submission" date="2003-11" db="EMBL/GenBank/DDBJ databases">
        <authorList>
            <person name="Davis-Poynter N."/>
            <person name="Nugent J."/>
            <person name="Birch-Machin I."/>
            <person name="Allen G.P."/>
        </authorList>
    </citation>
    <scope>NUCLEOTIDE SEQUENCE [LARGE SCALE GENOMIC DNA]</scope>
</reference>
<accession>Q6S6P9</accession>
<organism>
    <name type="scientific">Equine herpesvirus 1 (strain V592)</name>
    <name type="common">EHV-1</name>
    <name type="synonym">Equine abortion virus</name>
    <dbReference type="NCBI Taxonomy" id="310273"/>
    <lineage>
        <taxon>Viruses</taxon>
        <taxon>Duplodnaviria</taxon>
        <taxon>Heunggongvirae</taxon>
        <taxon>Peploviricota</taxon>
        <taxon>Herviviricetes</taxon>
        <taxon>Herpesvirales</taxon>
        <taxon>Orthoherpesviridae</taxon>
        <taxon>Alphaherpesvirinae</taxon>
        <taxon>Varicellovirus</taxon>
        <taxon>Varicellovirus equidalpha1</taxon>
        <taxon>Equid alphaherpesvirus 1</taxon>
    </lineage>
</organism>
<sequence>MNLGGNRFVQIGNGMSNIMYTDANGAVRWEQISPPAGFPQQQRGRGRGHVAFGLPNTLDWLPGFVQATPNSITISNMGGIQISSAGVITAAINSEQNSWMLSSFNPSLKLTRQVTLTDFCDPTAERPGLPIIRLRHHLDAIGSSPSSTPPGRNPQELDEAWAALSELSVSGRSDTTGLRPSLLSLTFLVASRSGEYSDKAAAEAVRAHVLANYRDRRTEQRLDRFGEYLQAMVRTHVFPHKHMTVFGGLISHVIQDKLASLTAVAGGVQEGARTNNSAVPRSSVYVPACAFLDVDHELKLGDASAKFVYLIFVYSQRLRREGVRVYVAVSKFDEVAFEDAVSFLFHKARTESAIRGTEGADAPEPHPNAALPLQELSSSRCEPRCPPSRLNNREFTNALYQWAPDLRGRPNRTSCMYAAYIRLGAIASDPPRTTRRSERFGSVDMPVVWLENVRWDPQDWVECSY</sequence>
<feature type="chain" id="PRO_0000115718" description="Triplex capsid protein 1">
    <location>
        <begin position="1"/>
        <end position="465"/>
    </location>
</feature>
<comment type="function">
    <text evidence="1">Structural component of the T=16 icosahedral capsid. The capsid is composed of pentamers and hexamers of major capsid protein/MCP, which are linked together by heterotrimers called triplexes. These triplexes are formed by a single molecule of triplex protein 1/TRX1 and two copies of triplex protein 2/TRX2. Additionally, TRX1 is required for efficient transport of TRX2 to the nucleus, which is the site of capsid assembly.</text>
</comment>
<comment type="subunit">
    <text evidence="1">Interacts with TRX2, MCP and capsid vertex component 2/CVC2.</text>
</comment>
<comment type="subcellular location">
    <subcellularLocation>
        <location evidence="1">Virion</location>
    </subcellularLocation>
    <subcellularLocation>
        <location evidence="1">Host nucleus</location>
    </subcellularLocation>
</comment>
<comment type="similarity">
    <text evidence="1">Belongs to the herpesviridae TRX1 protein family.</text>
</comment>
<gene>
    <name evidence="1" type="primary">TRX1</name>
    <name type="ordered locus">22</name>
</gene>
<evidence type="ECO:0000255" key="1">
    <source>
        <dbReference type="HAMAP-Rule" id="MF_04018"/>
    </source>
</evidence>
<evidence type="ECO:0000305" key="2"/>
<evidence type="ECO:0000312" key="3">
    <source>
        <dbReference type="EMBL" id="AAS45906.1"/>
    </source>
</evidence>
<name>TRX1_EHV1V</name>
<protein>
    <recommendedName>
        <fullName evidence="1">Triplex capsid protein 1</fullName>
    </recommendedName>
</protein>